<gene>
    <name evidence="1" type="primary">valS</name>
    <name type="ordered locus">XC_3588</name>
</gene>
<keyword id="KW-0030">Aminoacyl-tRNA synthetase</keyword>
<keyword id="KW-0067">ATP-binding</keyword>
<keyword id="KW-0175">Coiled coil</keyword>
<keyword id="KW-0963">Cytoplasm</keyword>
<keyword id="KW-0436">Ligase</keyword>
<keyword id="KW-0547">Nucleotide-binding</keyword>
<keyword id="KW-0648">Protein biosynthesis</keyword>
<protein>
    <recommendedName>
        <fullName evidence="1">Valine--tRNA ligase</fullName>
        <ecNumber evidence="1">6.1.1.9</ecNumber>
    </recommendedName>
    <alternativeName>
        <fullName evidence="1">Valyl-tRNA synthetase</fullName>
        <shortName evidence="1">ValRS</shortName>
    </alternativeName>
</protein>
<dbReference type="EC" id="6.1.1.9" evidence="1"/>
<dbReference type="EMBL" id="CP000050">
    <property type="protein sequence ID" value="AAY50630.1"/>
    <property type="molecule type" value="Genomic_DNA"/>
</dbReference>
<dbReference type="RefSeq" id="WP_011035888.1">
    <property type="nucleotide sequence ID" value="NZ_CP155948.1"/>
</dbReference>
<dbReference type="SMR" id="Q4UQP3"/>
<dbReference type="KEGG" id="xcb:XC_3588"/>
<dbReference type="HOGENOM" id="CLU_001493_0_2_6"/>
<dbReference type="Proteomes" id="UP000000420">
    <property type="component" value="Chromosome"/>
</dbReference>
<dbReference type="GO" id="GO:0005829">
    <property type="term" value="C:cytosol"/>
    <property type="evidence" value="ECO:0007669"/>
    <property type="project" value="TreeGrafter"/>
</dbReference>
<dbReference type="GO" id="GO:0002161">
    <property type="term" value="F:aminoacyl-tRNA deacylase activity"/>
    <property type="evidence" value="ECO:0007669"/>
    <property type="project" value="InterPro"/>
</dbReference>
<dbReference type="GO" id="GO:0005524">
    <property type="term" value="F:ATP binding"/>
    <property type="evidence" value="ECO:0007669"/>
    <property type="project" value="UniProtKB-UniRule"/>
</dbReference>
<dbReference type="GO" id="GO:0004832">
    <property type="term" value="F:valine-tRNA ligase activity"/>
    <property type="evidence" value="ECO:0007669"/>
    <property type="project" value="UniProtKB-UniRule"/>
</dbReference>
<dbReference type="GO" id="GO:0006438">
    <property type="term" value="P:valyl-tRNA aminoacylation"/>
    <property type="evidence" value="ECO:0007669"/>
    <property type="project" value="UniProtKB-UniRule"/>
</dbReference>
<dbReference type="CDD" id="cd07962">
    <property type="entry name" value="Anticodon_Ia_Val"/>
    <property type="match status" value="1"/>
</dbReference>
<dbReference type="CDD" id="cd00817">
    <property type="entry name" value="ValRS_core"/>
    <property type="match status" value="1"/>
</dbReference>
<dbReference type="FunFam" id="1.10.287.380:FF:000001">
    <property type="entry name" value="Valine--tRNA ligase"/>
    <property type="match status" value="1"/>
</dbReference>
<dbReference type="FunFam" id="3.40.50.620:FF:000032">
    <property type="entry name" value="Valine--tRNA ligase"/>
    <property type="match status" value="1"/>
</dbReference>
<dbReference type="FunFam" id="3.40.50.620:FF:000098">
    <property type="entry name" value="Valine--tRNA ligase"/>
    <property type="match status" value="1"/>
</dbReference>
<dbReference type="FunFam" id="3.90.740.10:FF:000015">
    <property type="entry name" value="Valine--tRNA ligase"/>
    <property type="match status" value="1"/>
</dbReference>
<dbReference type="Gene3D" id="3.40.50.620">
    <property type="entry name" value="HUPs"/>
    <property type="match status" value="2"/>
</dbReference>
<dbReference type="Gene3D" id="1.10.730.10">
    <property type="entry name" value="Isoleucyl-tRNA Synthetase, Domain 1"/>
    <property type="match status" value="1"/>
</dbReference>
<dbReference type="Gene3D" id="1.10.287.380">
    <property type="entry name" value="Valyl-tRNA synthetase, C-terminal domain"/>
    <property type="match status" value="1"/>
</dbReference>
<dbReference type="Gene3D" id="3.90.740.10">
    <property type="entry name" value="Valyl/Leucyl/Isoleucyl-tRNA synthetase, editing domain"/>
    <property type="match status" value="2"/>
</dbReference>
<dbReference type="HAMAP" id="MF_02004">
    <property type="entry name" value="Val_tRNA_synth_type1"/>
    <property type="match status" value="1"/>
</dbReference>
<dbReference type="InterPro" id="IPR001412">
    <property type="entry name" value="aa-tRNA-synth_I_CS"/>
</dbReference>
<dbReference type="InterPro" id="IPR002300">
    <property type="entry name" value="aa-tRNA-synth_Ia"/>
</dbReference>
<dbReference type="InterPro" id="IPR033705">
    <property type="entry name" value="Anticodon_Ia_Val"/>
</dbReference>
<dbReference type="InterPro" id="IPR013155">
    <property type="entry name" value="M/V/L/I-tRNA-synth_anticd-bd"/>
</dbReference>
<dbReference type="InterPro" id="IPR014729">
    <property type="entry name" value="Rossmann-like_a/b/a_fold"/>
</dbReference>
<dbReference type="InterPro" id="IPR010978">
    <property type="entry name" value="tRNA-bd_arm"/>
</dbReference>
<dbReference type="InterPro" id="IPR009080">
    <property type="entry name" value="tRNAsynth_Ia_anticodon-bd"/>
</dbReference>
<dbReference type="InterPro" id="IPR037118">
    <property type="entry name" value="Val-tRNA_synth_C_sf"/>
</dbReference>
<dbReference type="InterPro" id="IPR019499">
    <property type="entry name" value="Val-tRNA_synth_tRNA-bd"/>
</dbReference>
<dbReference type="InterPro" id="IPR009008">
    <property type="entry name" value="Val/Leu/Ile-tRNA-synth_edit"/>
</dbReference>
<dbReference type="InterPro" id="IPR002303">
    <property type="entry name" value="Valyl-tRNA_ligase"/>
</dbReference>
<dbReference type="NCBIfam" id="NF004349">
    <property type="entry name" value="PRK05729.1"/>
    <property type="match status" value="1"/>
</dbReference>
<dbReference type="NCBIfam" id="TIGR00422">
    <property type="entry name" value="valS"/>
    <property type="match status" value="1"/>
</dbReference>
<dbReference type="PANTHER" id="PTHR11946:SF93">
    <property type="entry name" value="VALINE--TRNA LIGASE, CHLOROPLASTIC_MITOCHONDRIAL 2"/>
    <property type="match status" value="1"/>
</dbReference>
<dbReference type="PANTHER" id="PTHR11946">
    <property type="entry name" value="VALYL-TRNA SYNTHETASES"/>
    <property type="match status" value="1"/>
</dbReference>
<dbReference type="Pfam" id="PF08264">
    <property type="entry name" value="Anticodon_1"/>
    <property type="match status" value="1"/>
</dbReference>
<dbReference type="Pfam" id="PF00133">
    <property type="entry name" value="tRNA-synt_1"/>
    <property type="match status" value="1"/>
</dbReference>
<dbReference type="Pfam" id="PF10458">
    <property type="entry name" value="Val_tRNA-synt_C"/>
    <property type="match status" value="1"/>
</dbReference>
<dbReference type="PRINTS" id="PR00986">
    <property type="entry name" value="TRNASYNTHVAL"/>
</dbReference>
<dbReference type="SUPFAM" id="SSF47323">
    <property type="entry name" value="Anticodon-binding domain of a subclass of class I aminoacyl-tRNA synthetases"/>
    <property type="match status" value="1"/>
</dbReference>
<dbReference type="SUPFAM" id="SSF52374">
    <property type="entry name" value="Nucleotidylyl transferase"/>
    <property type="match status" value="1"/>
</dbReference>
<dbReference type="SUPFAM" id="SSF46589">
    <property type="entry name" value="tRNA-binding arm"/>
    <property type="match status" value="1"/>
</dbReference>
<dbReference type="SUPFAM" id="SSF50677">
    <property type="entry name" value="ValRS/IleRS/LeuRS editing domain"/>
    <property type="match status" value="1"/>
</dbReference>
<dbReference type="PROSITE" id="PS00178">
    <property type="entry name" value="AA_TRNA_LIGASE_I"/>
    <property type="match status" value="1"/>
</dbReference>
<sequence length="944" mass="106095">MTQLASSYDPSSFESRLYAQWESAGHFKPSGSGEPYTVLLPPPNVTGTLHMGHAFQQTLMDALVRYHRMRGYDTLWQVGTDHAGIATEMVVSRNLALEGKGETRDTLGREGFIAKVWEWKAQSGDTIERQMRRLGTSSDWSRSTFTMDPQPSAAVTEAFVRWYEQGLIYRGQRLVNWDPVLKTAISDLEVENVEEDGFLWSIRYPLADGVTYEHVEHDADGVETLRETRDYLVVATTRPETMLGDTAVMVHPDDARYATLHAAQIVLPLTGRLVPVITDDYVDRAFGTGVVKVTPAHDFNDYQVGVRHDLPLINLFTVTAAINDNAPERYRGLDRYDARKLVLSELEDLGLLVETKPHKLQVPRGDRTGQVIEPYLTDQWFVKMDALAKRGLELVESGQVKFVPPNWINTYRHWMENIQDWCISRQLWWGHRIPAWFDEAGKCYVGHDEAQVRATHGLGAEVALHQDSDVLETWFSSQLWPFSTLGWPDAQAMDERGFARYLPSSVLVTGFDIIFFWVARMIMATDSFTGQVPFRDVYITGLIRDAQGQKMSKSKGNVLDPLDIIDGISIEDLVAKRTSGLMQPRMAEKIEKATRKEFPDGIIAHGADALRFTIAALATHGRDIKFDLGRAEGYKNFCNKLWNATRFALMNTEGAQFSGVPQPQTETERWILARLDAVAAEAQAHYANYRFDLLAQTLYEFAWNAFCDWFVELAKPALNGAVQDAADSTRHTLLYVLEALLRLLHPLTPFVTEELWQQVAPRLGITGDTISLQAFPQRGDVDTSGYAGAEADIEWLKAMVSALRRVRSELNVPPSKQVRLWLQAGSSDDRARVARFASQLAFLLKLEAIDWLAAGQEAPPAAAAIVGELTLLVPLEGLVDMDAERTRLDKEIKRVENEIGKCNGKLGNATFVQNAPAAVVEQERARLNDWTTQLTGLREQRAKL</sequence>
<name>SYV_XANC8</name>
<reference key="1">
    <citation type="journal article" date="2005" name="Genome Res.">
        <title>Comparative and functional genomic analyses of the pathogenicity of phytopathogen Xanthomonas campestris pv. campestris.</title>
        <authorList>
            <person name="Qian W."/>
            <person name="Jia Y."/>
            <person name="Ren S.-X."/>
            <person name="He Y.-Q."/>
            <person name="Feng J.-X."/>
            <person name="Lu L.-F."/>
            <person name="Sun Q."/>
            <person name="Ying G."/>
            <person name="Tang D.-J."/>
            <person name="Tang H."/>
            <person name="Wu W."/>
            <person name="Hao P."/>
            <person name="Wang L."/>
            <person name="Jiang B.-L."/>
            <person name="Zeng S."/>
            <person name="Gu W.-Y."/>
            <person name="Lu G."/>
            <person name="Rong L."/>
            <person name="Tian Y."/>
            <person name="Yao Z."/>
            <person name="Fu G."/>
            <person name="Chen B."/>
            <person name="Fang R."/>
            <person name="Qiang B."/>
            <person name="Chen Z."/>
            <person name="Zhao G.-P."/>
            <person name="Tang J.-L."/>
            <person name="He C."/>
        </authorList>
    </citation>
    <scope>NUCLEOTIDE SEQUENCE [LARGE SCALE GENOMIC DNA]</scope>
    <source>
        <strain>8004</strain>
    </source>
</reference>
<comment type="function">
    <text evidence="1">Catalyzes the attachment of valine to tRNA(Val). As ValRS can inadvertently accommodate and process structurally similar amino acids such as threonine, to avoid such errors, it has a 'posttransfer' editing activity that hydrolyzes mischarged Thr-tRNA(Val) in a tRNA-dependent manner.</text>
</comment>
<comment type="catalytic activity">
    <reaction evidence="1">
        <text>tRNA(Val) + L-valine + ATP = L-valyl-tRNA(Val) + AMP + diphosphate</text>
        <dbReference type="Rhea" id="RHEA:10704"/>
        <dbReference type="Rhea" id="RHEA-COMP:9672"/>
        <dbReference type="Rhea" id="RHEA-COMP:9708"/>
        <dbReference type="ChEBI" id="CHEBI:30616"/>
        <dbReference type="ChEBI" id="CHEBI:33019"/>
        <dbReference type="ChEBI" id="CHEBI:57762"/>
        <dbReference type="ChEBI" id="CHEBI:78442"/>
        <dbReference type="ChEBI" id="CHEBI:78537"/>
        <dbReference type="ChEBI" id="CHEBI:456215"/>
        <dbReference type="EC" id="6.1.1.9"/>
    </reaction>
</comment>
<comment type="subunit">
    <text evidence="1">Monomer.</text>
</comment>
<comment type="subcellular location">
    <subcellularLocation>
        <location evidence="1">Cytoplasm</location>
    </subcellularLocation>
</comment>
<comment type="domain">
    <text evidence="1">ValRS has two distinct active sites: one for aminoacylation and one for editing. The misactivated threonine is translocated from the active site to the editing site.</text>
</comment>
<comment type="domain">
    <text evidence="1">The C-terminal coiled-coil domain is crucial for aminoacylation activity.</text>
</comment>
<comment type="similarity">
    <text evidence="1">Belongs to the class-I aminoacyl-tRNA synthetase family. ValS type 1 subfamily.</text>
</comment>
<accession>Q4UQP3</accession>
<feature type="chain" id="PRO_0000224600" description="Valine--tRNA ligase">
    <location>
        <begin position="1"/>
        <end position="944"/>
    </location>
</feature>
<feature type="coiled-coil region" evidence="1">
    <location>
        <begin position="878"/>
        <end position="944"/>
    </location>
</feature>
<feature type="short sequence motif" description="'HIGH' region">
    <location>
        <begin position="43"/>
        <end position="53"/>
    </location>
</feature>
<feature type="short sequence motif" description="'KMSKS' region">
    <location>
        <begin position="550"/>
        <end position="554"/>
    </location>
</feature>
<feature type="binding site" evidence="1">
    <location>
        <position position="553"/>
    </location>
    <ligand>
        <name>ATP</name>
        <dbReference type="ChEBI" id="CHEBI:30616"/>
    </ligand>
</feature>
<organism>
    <name type="scientific">Xanthomonas campestris pv. campestris (strain 8004)</name>
    <dbReference type="NCBI Taxonomy" id="314565"/>
    <lineage>
        <taxon>Bacteria</taxon>
        <taxon>Pseudomonadati</taxon>
        <taxon>Pseudomonadota</taxon>
        <taxon>Gammaproteobacteria</taxon>
        <taxon>Lysobacterales</taxon>
        <taxon>Lysobacteraceae</taxon>
        <taxon>Xanthomonas</taxon>
    </lineage>
</organism>
<proteinExistence type="inferred from homology"/>
<evidence type="ECO:0000255" key="1">
    <source>
        <dbReference type="HAMAP-Rule" id="MF_02004"/>
    </source>
</evidence>